<proteinExistence type="evidence at protein level"/>
<name>VATA_DICDI</name>
<dbReference type="EC" id="7.1.2.2"/>
<dbReference type="EMBL" id="U49169">
    <property type="protein sequence ID" value="AAB50981.1"/>
    <property type="molecule type" value="mRNA"/>
</dbReference>
<dbReference type="EMBL" id="AAFI02000098">
    <property type="protein sequence ID" value="EAL63838.1"/>
    <property type="molecule type" value="Genomic_DNA"/>
</dbReference>
<dbReference type="EMBL" id="L43963">
    <property type="protein sequence ID" value="AAA70420.1"/>
    <property type="molecule type" value="mRNA"/>
</dbReference>
<dbReference type="RefSeq" id="XP_637351.1">
    <property type="nucleotide sequence ID" value="XM_632259.1"/>
</dbReference>
<dbReference type="SMR" id="P54647"/>
<dbReference type="FunCoup" id="P54647">
    <property type="interactions" value="632"/>
</dbReference>
<dbReference type="STRING" id="44689.P54647"/>
<dbReference type="PaxDb" id="44689-DDB0201563"/>
<dbReference type="ABCD" id="P54647">
    <property type="antibodies" value="1 sequenced antibody"/>
</dbReference>
<dbReference type="EnsemblProtists" id="EAL63838">
    <property type="protein sequence ID" value="EAL63838"/>
    <property type="gene ID" value="DDB_G0287127"/>
</dbReference>
<dbReference type="GeneID" id="8625973"/>
<dbReference type="KEGG" id="ddi:DDB_G0287127"/>
<dbReference type="dictyBase" id="DDB_G0287127">
    <property type="gene designation" value="vatA"/>
</dbReference>
<dbReference type="VEuPathDB" id="AmoebaDB:DDB_G0287127"/>
<dbReference type="eggNOG" id="KOG1352">
    <property type="taxonomic scope" value="Eukaryota"/>
</dbReference>
<dbReference type="HOGENOM" id="CLU_008162_3_1_1"/>
<dbReference type="InParanoid" id="P54647"/>
<dbReference type="OMA" id="RIVKTFW"/>
<dbReference type="PhylomeDB" id="P54647"/>
<dbReference type="Reactome" id="R-DDI-1222556">
    <property type="pathway name" value="ROS and RNS production in phagocytes"/>
</dbReference>
<dbReference type="Reactome" id="R-DDI-77387">
    <property type="pathway name" value="Insulin receptor recycling"/>
</dbReference>
<dbReference type="Reactome" id="R-DDI-917977">
    <property type="pathway name" value="Transferrin endocytosis and recycling"/>
</dbReference>
<dbReference type="Reactome" id="R-DDI-9639288">
    <property type="pathway name" value="Amino acids regulate mTORC1"/>
</dbReference>
<dbReference type="PRO" id="PR:P54647"/>
<dbReference type="Proteomes" id="UP000002195">
    <property type="component" value="Chromosome 4"/>
</dbReference>
<dbReference type="GO" id="GO:0000331">
    <property type="term" value="C:contractile vacuole"/>
    <property type="evidence" value="ECO:0000314"/>
    <property type="project" value="dictyBase"/>
</dbReference>
<dbReference type="GO" id="GO:0030139">
    <property type="term" value="C:endocytic vesicle"/>
    <property type="evidence" value="ECO:0000314"/>
    <property type="project" value="dictyBase"/>
</dbReference>
<dbReference type="GO" id="GO:0140220">
    <property type="term" value="C:pathogen-containing vacuole"/>
    <property type="evidence" value="ECO:0007005"/>
    <property type="project" value="dictyBase"/>
</dbReference>
<dbReference type="GO" id="GO:0045335">
    <property type="term" value="C:phagocytic vesicle"/>
    <property type="evidence" value="ECO:0000314"/>
    <property type="project" value="dictyBase"/>
</dbReference>
<dbReference type="GO" id="GO:0033180">
    <property type="term" value="C:proton-transporting V-type ATPase, V1 domain"/>
    <property type="evidence" value="ECO:0007669"/>
    <property type="project" value="InterPro"/>
</dbReference>
<dbReference type="GO" id="GO:0005524">
    <property type="term" value="F:ATP binding"/>
    <property type="evidence" value="ECO:0007669"/>
    <property type="project" value="UniProtKB-KW"/>
</dbReference>
<dbReference type="GO" id="GO:0016887">
    <property type="term" value="F:ATP hydrolysis activity"/>
    <property type="evidence" value="ECO:0007669"/>
    <property type="project" value="InterPro"/>
</dbReference>
<dbReference type="GO" id="GO:0044877">
    <property type="term" value="F:protein-containing complex binding"/>
    <property type="evidence" value="ECO:0000314"/>
    <property type="project" value="dictyBase"/>
</dbReference>
<dbReference type="GO" id="GO:0046961">
    <property type="term" value="F:proton-transporting ATPase activity, rotational mechanism"/>
    <property type="evidence" value="ECO:0000318"/>
    <property type="project" value="GO_Central"/>
</dbReference>
<dbReference type="GO" id="GO:0046034">
    <property type="term" value="P:ATP metabolic process"/>
    <property type="evidence" value="ECO:0007669"/>
    <property type="project" value="InterPro"/>
</dbReference>
<dbReference type="GO" id="GO:1902600">
    <property type="term" value="P:proton transmembrane transport"/>
    <property type="evidence" value="ECO:0000318"/>
    <property type="project" value="GO_Central"/>
</dbReference>
<dbReference type="GO" id="GO:0009617">
    <property type="term" value="P:response to bacterium"/>
    <property type="evidence" value="ECO:0007007"/>
    <property type="project" value="dictyBase"/>
</dbReference>
<dbReference type="CDD" id="cd18111">
    <property type="entry name" value="ATP-synt_V_A-type_alpha_C"/>
    <property type="match status" value="1"/>
</dbReference>
<dbReference type="CDD" id="cd18119">
    <property type="entry name" value="ATP-synt_V_A-type_alpha_N"/>
    <property type="match status" value="1"/>
</dbReference>
<dbReference type="CDD" id="cd01134">
    <property type="entry name" value="V_A-ATPase_A"/>
    <property type="match status" value="1"/>
</dbReference>
<dbReference type="FunFam" id="1.10.1140.10:FF:000002">
    <property type="entry name" value="V-type proton ATPase catalytic subunit A"/>
    <property type="match status" value="1"/>
</dbReference>
<dbReference type="FunFam" id="2.40.30.20:FF:000002">
    <property type="entry name" value="V-type proton ATPase catalytic subunit A"/>
    <property type="match status" value="1"/>
</dbReference>
<dbReference type="FunFam" id="2.40.50.100:FF:000008">
    <property type="entry name" value="V-type proton ATPase catalytic subunit A"/>
    <property type="match status" value="1"/>
</dbReference>
<dbReference type="FunFam" id="3.40.50.300:FF:000052">
    <property type="entry name" value="V-type proton ATPase catalytic subunit A"/>
    <property type="match status" value="1"/>
</dbReference>
<dbReference type="Gene3D" id="2.40.30.20">
    <property type="match status" value="1"/>
</dbReference>
<dbReference type="Gene3D" id="2.40.50.100">
    <property type="match status" value="1"/>
</dbReference>
<dbReference type="Gene3D" id="1.10.1140.10">
    <property type="entry name" value="Bovine Mitochondrial F1-atpase, Atp Synthase Beta Chain, Chain D, domain 3"/>
    <property type="match status" value="1"/>
</dbReference>
<dbReference type="Gene3D" id="3.40.50.300">
    <property type="entry name" value="P-loop containing nucleotide triphosphate hydrolases"/>
    <property type="match status" value="1"/>
</dbReference>
<dbReference type="HAMAP" id="MF_00309">
    <property type="entry name" value="ATP_synth_A_arch"/>
    <property type="match status" value="1"/>
</dbReference>
<dbReference type="InterPro" id="IPR055190">
    <property type="entry name" value="ATP-synt_VA_C"/>
</dbReference>
<dbReference type="InterPro" id="IPR031686">
    <property type="entry name" value="ATP-synth_a_Xtn"/>
</dbReference>
<dbReference type="InterPro" id="IPR023366">
    <property type="entry name" value="ATP_synth_asu-like_sf"/>
</dbReference>
<dbReference type="InterPro" id="IPR020003">
    <property type="entry name" value="ATPase_a/bsu_AS"/>
</dbReference>
<dbReference type="InterPro" id="IPR004100">
    <property type="entry name" value="ATPase_F1/V1/A1_a/bsu_N"/>
</dbReference>
<dbReference type="InterPro" id="IPR036121">
    <property type="entry name" value="ATPase_F1/V1/A1_a/bsu_N_sf"/>
</dbReference>
<dbReference type="InterPro" id="IPR000194">
    <property type="entry name" value="ATPase_F1/V1/A1_a/bsu_nucl-bd"/>
</dbReference>
<dbReference type="InterPro" id="IPR024034">
    <property type="entry name" value="ATPase_F1/V1_b/a_C"/>
</dbReference>
<dbReference type="InterPro" id="IPR005725">
    <property type="entry name" value="ATPase_V1-cplx_asu"/>
</dbReference>
<dbReference type="InterPro" id="IPR027417">
    <property type="entry name" value="P-loop_NTPase"/>
</dbReference>
<dbReference type="InterPro" id="IPR022878">
    <property type="entry name" value="V-ATPase_asu"/>
</dbReference>
<dbReference type="NCBIfam" id="NF003220">
    <property type="entry name" value="PRK04192.1"/>
    <property type="match status" value="1"/>
</dbReference>
<dbReference type="NCBIfam" id="TIGR01042">
    <property type="entry name" value="V-ATPase_V1_A"/>
    <property type="match status" value="1"/>
</dbReference>
<dbReference type="PANTHER" id="PTHR43607:SF1">
    <property type="entry name" value="H(+)-TRANSPORTING TWO-SECTOR ATPASE"/>
    <property type="match status" value="1"/>
</dbReference>
<dbReference type="PANTHER" id="PTHR43607">
    <property type="entry name" value="V-TYPE PROTON ATPASE CATALYTIC SUBUNIT A"/>
    <property type="match status" value="1"/>
</dbReference>
<dbReference type="Pfam" id="PF00006">
    <property type="entry name" value="ATP-synt_ab"/>
    <property type="match status" value="1"/>
</dbReference>
<dbReference type="Pfam" id="PF02874">
    <property type="entry name" value="ATP-synt_ab_N"/>
    <property type="match status" value="1"/>
</dbReference>
<dbReference type="Pfam" id="PF16886">
    <property type="entry name" value="ATP-synt_ab_Xtn"/>
    <property type="match status" value="1"/>
</dbReference>
<dbReference type="Pfam" id="PF22919">
    <property type="entry name" value="ATP-synt_VA_C"/>
    <property type="match status" value="1"/>
</dbReference>
<dbReference type="SUPFAM" id="SSF47917">
    <property type="entry name" value="C-terminal domain of alpha and beta subunits of F1 ATP synthase"/>
    <property type="match status" value="1"/>
</dbReference>
<dbReference type="SUPFAM" id="SSF50615">
    <property type="entry name" value="N-terminal domain of alpha and beta subunits of F1 ATP synthase"/>
    <property type="match status" value="1"/>
</dbReference>
<dbReference type="SUPFAM" id="SSF52540">
    <property type="entry name" value="P-loop containing nucleoside triphosphate hydrolases"/>
    <property type="match status" value="1"/>
</dbReference>
<dbReference type="PROSITE" id="PS00152">
    <property type="entry name" value="ATPASE_ALPHA_BETA"/>
    <property type="match status" value="1"/>
</dbReference>
<keyword id="KW-0067">ATP-binding</keyword>
<keyword id="KW-0375">Hydrogen ion transport</keyword>
<keyword id="KW-0406">Ion transport</keyword>
<keyword id="KW-0547">Nucleotide-binding</keyword>
<keyword id="KW-1185">Reference proteome</keyword>
<keyword id="KW-1278">Translocase</keyword>
<keyword id="KW-0813">Transport</keyword>
<comment type="function">
    <text>Catalytic subunit of the peripheral V1 complex of vacuolar ATPase. V-ATPase vacuolar ATPase is responsible for acidifying a variety of intracellular compartments in eukaryotic cells.</text>
</comment>
<comment type="catalytic activity">
    <reaction>
        <text>ATP + H2O + 4 H(+)(in) = ADP + phosphate + 5 H(+)(out)</text>
        <dbReference type="Rhea" id="RHEA:57720"/>
        <dbReference type="ChEBI" id="CHEBI:15377"/>
        <dbReference type="ChEBI" id="CHEBI:15378"/>
        <dbReference type="ChEBI" id="CHEBI:30616"/>
        <dbReference type="ChEBI" id="CHEBI:43474"/>
        <dbReference type="ChEBI" id="CHEBI:456216"/>
        <dbReference type="EC" id="7.1.2.2"/>
    </reaction>
</comment>
<comment type="subunit">
    <text>V-ATPase is a heteromultimeric enzyme composed of a peripheral catalytic V1 complex (main components: subunits A, B, C, D, E, and F) attached to an integral membrane V0 proton pore complex (main component: the proteolipid protein).</text>
</comment>
<comment type="similarity">
    <text evidence="2">Belongs to the ATPase alpha/beta chains family.</text>
</comment>
<organism>
    <name type="scientific">Dictyostelium discoideum</name>
    <name type="common">Social amoeba</name>
    <dbReference type="NCBI Taxonomy" id="44689"/>
    <lineage>
        <taxon>Eukaryota</taxon>
        <taxon>Amoebozoa</taxon>
        <taxon>Evosea</taxon>
        <taxon>Eumycetozoa</taxon>
        <taxon>Dictyostelia</taxon>
        <taxon>Dictyosteliales</taxon>
        <taxon>Dictyosteliaceae</taxon>
        <taxon>Dictyostelium</taxon>
    </lineage>
</organism>
<gene>
    <name type="primary">vatA</name>
    <name type="ORF">DDB_G0287127</name>
</gene>
<protein>
    <recommendedName>
        <fullName>V-type proton ATPase catalytic subunit A</fullName>
        <shortName>V-ATPase subunit A</shortName>
        <ecNumber>7.1.2.2</ecNumber>
    </recommendedName>
    <alternativeName>
        <fullName>V-ATPase 69 kDa subunit</fullName>
    </alternativeName>
    <alternativeName>
        <fullName>Vacuolar proton pump subunit alpha</fullName>
    </alternativeName>
</protein>
<sequence length="618" mass="68201">MSKNSGLPSFASTEADNSQGFVLSVSGPVVIANQLAGAAMYELVRVGHNQLVGEIIRLEEDTATIQVYEETSGLTVGDPVLRTHKPLTVELGPGIMNNIFDGIQRPLNAIAEITKGIYIPRGINTPSLNRTIKWPYQPDTKLKVGDNVSGGDIFGQVVENNLIIHKIMVPPKEMGTIVEIAPAGEYTLDHALLTIEFDGKRKQLTMVHNWPVRSARPVIEKLPCNYPLLTGQRVLDSLFPCVQGGTCAIPGAFGCGKTVISQSLSKFSNSDAIVYVGCGERGNEMAEVLMEFPELHTKVGDKEEPIMQRTCLVANTSNMPVAAREASIYTGITLAEYFRDMGLNVAMMADSTSRWAEALREISGRLAEMPADSGYPAYLGARLASFYERAGRVSCIGHPTRIGSVTIVGAVSPPGGDFADPVTAATLGIVQVFWGLDKKLAQRKHFPSINWLISFSKYMQALDTHYDQMDPEFVPLRTRAKEILQMEEDLSEIVQLVGQDSLGESEKITIEVARIIRDDFLQQNGFSPYDKCCPFFKTVWMLKNMMTFYNLAQKAVESSTADNKVTWNQIKNELKEIIHRITSMKFQDPTDGEQTLTAHFSTLNEDIITAFRNFSDLV</sequence>
<accession>P54647</accession>
<accession>O00779</accession>
<evidence type="ECO:0000255" key="1"/>
<evidence type="ECO:0000305" key="2"/>
<feature type="chain" id="PRO_0000144565" description="V-type proton ATPase catalytic subunit A">
    <location>
        <begin position="1"/>
        <end position="618"/>
    </location>
</feature>
<feature type="binding site" evidence="1">
    <location>
        <begin position="251"/>
        <end position="258"/>
    </location>
    <ligand>
        <name>ATP</name>
        <dbReference type="ChEBI" id="CHEBI:30616"/>
    </ligand>
</feature>
<feature type="sequence conflict" description="In Ref. 3; AAA70420." evidence="2" ref="3">
    <original>E</original>
    <variation>Q</variation>
    <location>
        <position position="69"/>
    </location>
</feature>
<feature type="sequence conflict" description="In Ref. 3; AAA70420." evidence="2" ref="3">
    <original>K</original>
    <variation>F</variation>
    <location>
        <position position="115"/>
    </location>
</feature>
<reference key="1">
    <citation type="submission" date="1996-02" db="EMBL/GenBank/DDBJ databases">
        <authorList>
            <person name="Burdine V."/>
            <person name="Liu T."/>
            <person name="Clarke M."/>
        </authorList>
    </citation>
    <scope>NUCLEOTIDE SEQUENCE [MRNA]</scope>
    <source>
        <strain>AX4</strain>
    </source>
</reference>
<reference key="2">
    <citation type="journal article" date="2005" name="Nature">
        <title>The genome of the social amoeba Dictyostelium discoideum.</title>
        <authorList>
            <person name="Eichinger L."/>
            <person name="Pachebat J.A."/>
            <person name="Gloeckner G."/>
            <person name="Rajandream M.A."/>
            <person name="Sucgang R."/>
            <person name="Berriman M."/>
            <person name="Song J."/>
            <person name="Olsen R."/>
            <person name="Szafranski K."/>
            <person name="Xu Q."/>
            <person name="Tunggal B."/>
            <person name="Kummerfeld S."/>
            <person name="Madera M."/>
            <person name="Konfortov B.A."/>
            <person name="Rivero F."/>
            <person name="Bankier A.T."/>
            <person name="Lehmann R."/>
            <person name="Hamlin N."/>
            <person name="Davies R."/>
            <person name="Gaudet P."/>
            <person name="Fey P."/>
            <person name="Pilcher K."/>
            <person name="Chen G."/>
            <person name="Saunders D."/>
            <person name="Sodergren E.J."/>
            <person name="Davis P."/>
            <person name="Kerhornou A."/>
            <person name="Nie X."/>
            <person name="Hall N."/>
            <person name="Anjard C."/>
            <person name="Hemphill L."/>
            <person name="Bason N."/>
            <person name="Farbrother P."/>
            <person name="Desany B."/>
            <person name="Just E."/>
            <person name="Morio T."/>
            <person name="Rost R."/>
            <person name="Churcher C.M."/>
            <person name="Cooper J."/>
            <person name="Haydock S."/>
            <person name="van Driessche N."/>
            <person name="Cronin A."/>
            <person name="Goodhead I."/>
            <person name="Muzny D.M."/>
            <person name="Mourier T."/>
            <person name="Pain A."/>
            <person name="Lu M."/>
            <person name="Harper D."/>
            <person name="Lindsay R."/>
            <person name="Hauser H."/>
            <person name="James K.D."/>
            <person name="Quiles M."/>
            <person name="Madan Babu M."/>
            <person name="Saito T."/>
            <person name="Buchrieser C."/>
            <person name="Wardroper A."/>
            <person name="Felder M."/>
            <person name="Thangavelu M."/>
            <person name="Johnson D."/>
            <person name="Knights A."/>
            <person name="Loulseged H."/>
            <person name="Mungall K.L."/>
            <person name="Oliver K."/>
            <person name="Price C."/>
            <person name="Quail M.A."/>
            <person name="Urushihara H."/>
            <person name="Hernandez J."/>
            <person name="Rabbinowitsch E."/>
            <person name="Steffen D."/>
            <person name="Sanders M."/>
            <person name="Ma J."/>
            <person name="Kohara Y."/>
            <person name="Sharp S."/>
            <person name="Simmonds M.N."/>
            <person name="Spiegler S."/>
            <person name="Tivey A."/>
            <person name="Sugano S."/>
            <person name="White B."/>
            <person name="Walker D."/>
            <person name="Woodward J.R."/>
            <person name="Winckler T."/>
            <person name="Tanaka Y."/>
            <person name="Shaulsky G."/>
            <person name="Schleicher M."/>
            <person name="Weinstock G.M."/>
            <person name="Rosenthal A."/>
            <person name="Cox E.C."/>
            <person name="Chisholm R.L."/>
            <person name="Gibbs R.A."/>
            <person name="Loomis W.F."/>
            <person name="Platzer M."/>
            <person name="Kay R.R."/>
            <person name="Williams J.G."/>
            <person name="Dear P.H."/>
            <person name="Noegel A.A."/>
            <person name="Barrell B.G."/>
            <person name="Kuspa A."/>
        </authorList>
    </citation>
    <scope>NUCLEOTIDE SEQUENCE [LARGE SCALE GENOMIC DNA]</scope>
    <source>
        <strain>AX4</strain>
    </source>
</reference>
<reference key="3">
    <citation type="submission" date="1995-07" db="EMBL/GenBank/DDBJ databases">
        <authorList>
            <person name="Rauchenberger R."/>
            <person name="Maniak M."/>
        </authorList>
    </citation>
    <scope>NUCLEOTIDE SEQUENCE [MRNA] OF 69-197</scope>
    <source>
        <strain>AX3</strain>
    </source>
</reference>
<reference key="4">
    <citation type="journal article" date="2006" name="Mol. Cell. Proteomics">
        <title>Proteomics fingerprinting of phagosome maturation and evidence for the role of a Galpha during uptake.</title>
        <authorList>
            <person name="Gotthardt D."/>
            <person name="Blancheteau V."/>
            <person name="Bosserhoff A."/>
            <person name="Ruppert T."/>
            <person name="Delorenzi M."/>
            <person name="Soldati T."/>
        </authorList>
    </citation>
    <scope>IDENTIFICATION BY MASS SPECTROMETRY [LARGE SCALE ANALYSIS]</scope>
    <source>
        <strain>AX2</strain>
    </source>
</reference>